<gene>
    <name type="primary">DUSP18</name>
</gene>
<organism>
    <name type="scientific">Pongo abelii</name>
    <name type="common">Sumatran orangutan</name>
    <name type="synonym">Pongo pygmaeus abelii</name>
    <dbReference type="NCBI Taxonomy" id="9601"/>
    <lineage>
        <taxon>Eukaryota</taxon>
        <taxon>Metazoa</taxon>
        <taxon>Chordata</taxon>
        <taxon>Craniata</taxon>
        <taxon>Vertebrata</taxon>
        <taxon>Euteleostomi</taxon>
        <taxon>Mammalia</taxon>
        <taxon>Eutheria</taxon>
        <taxon>Euarchontoglires</taxon>
        <taxon>Primates</taxon>
        <taxon>Haplorrhini</taxon>
        <taxon>Catarrhini</taxon>
        <taxon>Hominidae</taxon>
        <taxon>Pongo</taxon>
    </lineage>
</organism>
<name>DUS18_PONAB</name>
<reference key="1">
    <citation type="submission" date="2004-11" db="EMBL/GenBank/DDBJ databases">
        <authorList>
            <consortium name="The German cDNA consortium"/>
        </authorList>
    </citation>
    <scope>NUCLEOTIDE SEQUENCE [LARGE SCALE MRNA]</scope>
    <source>
        <tissue>Brain cortex</tissue>
    </source>
</reference>
<evidence type="ECO:0000250" key="1"/>
<evidence type="ECO:0000250" key="2">
    <source>
        <dbReference type="UniProtKB" id="Q8NEJ0"/>
    </source>
</evidence>
<evidence type="ECO:0000250" key="3">
    <source>
        <dbReference type="UniProtKB" id="Q8VE01"/>
    </source>
</evidence>
<evidence type="ECO:0000255" key="4">
    <source>
        <dbReference type="PROSITE-ProRule" id="PRU00160"/>
    </source>
</evidence>
<evidence type="ECO:0000255" key="5">
    <source>
        <dbReference type="PROSITE-ProRule" id="PRU10044"/>
    </source>
</evidence>
<evidence type="ECO:0000305" key="6"/>
<sequence length="188" mass="21051">MTAPSCAFPVQFRQPSVSGLSQITKSLYISNGVAANNKLMLSSNQITMVINVSVEVVNTLYEDIQYLQVPVADAPDSRLCDFFDPVADHIHSVEMKQGRTLLHCAAGVSRSAALCLAYLMKYHAMSLLDAHTWTKSCRPIIRPNSGFWEQLIHYEFQLFGKNTVHMVSSPMGMIPDIYEKEVRLMIPL</sequence>
<keyword id="KW-0963">Cytoplasm</keyword>
<keyword id="KW-0378">Hydrolase</keyword>
<keyword id="KW-0472">Membrane</keyword>
<keyword id="KW-0496">Mitochondrion</keyword>
<keyword id="KW-0999">Mitochondrion inner membrane</keyword>
<keyword id="KW-0539">Nucleus</keyword>
<keyword id="KW-0904">Protein phosphatase</keyword>
<keyword id="KW-1185">Reference proteome</keyword>
<feature type="chain" id="PRO_0000094830" description="Dual specificity protein phosphatase 18">
    <location>
        <begin position="1"/>
        <end position="188"/>
    </location>
</feature>
<feature type="domain" description="Tyrosine-protein phosphatase" evidence="4">
    <location>
        <begin position="19"/>
        <end position="160"/>
    </location>
</feature>
<feature type="region of interest" description="Sufficient for mitochondrial localization" evidence="1">
    <location>
        <begin position="95"/>
        <end position="141"/>
    </location>
</feature>
<feature type="active site" description="Phosphocysteine intermediate" evidence="4">
    <location>
        <position position="104"/>
    </location>
</feature>
<comment type="function">
    <text evidence="2">Can dephosphorylate single and diphosphorylated synthetic MAPK peptides, with preference for the phosphotyrosine and diphosphorylated forms over phosphothreonine. In vitro, dephosphorylates p-nitrophenyl phosphate (pNPP).</text>
</comment>
<comment type="catalytic activity">
    <reaction evidence="5">
        <text>O-phospho-L-tyrosyl-[protein] + H2O = L-tyrosyl-[protein] + phosphate</text>
        <dbReference type="Rhea" id="RHEA:10684"/>
        <dbReference type="Rhea" id="RHEA-COMP:10136"/>
        <dbReference type="Rhea" id="RHEA-COMP:20101"/>
        <dbReference type="ChEBI" id="CHEBI:15377"/>
        <dbReference type="ChEBI" id="CHEBI:43474"/>
        <dbReference type="ChEBI" id="CHEBI:46858"/>
        <dbReference type="ChEBI" id="CHEBI:61978"/>
        <dbReference type="EC" id="3.1.3.48"/>
    </reaction>
</comment>
<comment type="catalytic activity">
    <reaction evidence="2">
        <text>O-phospho-L-seryl-[protein] + H2O = L-seryl-[protein] + phosphate</text>
        <dbReference type="Rhea" id="RHEA:20629"/>
        <dbReference type="Rhea" id="RHEA-COMP:9863"/>
        <dbReference type="Rhea" id="RHEA-COMP:11604"/>
        <dbReference type="ChEBI" id="CHEBI:15377"/>
        <dbReference type="ChEBI" id="CHEBI:29999"/>
        <dbReference type="ChEBI" id="CHEBI:43474"/>
        <dbReference type="ChEBI" id="CHEBI:83421"/>
        <dbReference type="EC" id="3.1.3.16"/>
    </reaction>
</comment>
<comment type="catalytic activity">
    <reaction evidence="2">
        <text>O-phospho-L-threonyl-[protein] + H2O = L-threonyl-[protein] + phosphate</text>
        <dbReference type="Rhea" id="RHEA:47004"/>
        <dbReference type="Rhea" id="RHEA-COMP:11060"/>
        <dbReference type="Rhea" id="RHEA-COMP:11605"/>
        <dbReference type="ChEBI" id="CHEBI:15377"/>
        <dbReference type="ChEBI" id="CHEBI:30013"/>
        <dbReference type="ChEBI" id="CHEBI:43474"/>
        <dbReference type="ChEBI" id="CHEBI:61977"/>
        <dbReference type="EC" id="3.1.3.16"/>
    </reaction>
</comment>
<comment type="subcellular location">
    <subcellularLocation>
        <location evidence="3">Cytoplasm</location>
    </subcellularLocation>
    <subcellularLocation>
        <location evidence="2">Nucleus</location>
    </subcellularLocation>
    <subcellularLocation>
        <location evidence="3">Mitochondrion inner membrane</location>
        <topology evidence="3">Peripheral membrane protein</topology>
        <orientation evidence="3">Intermembrane side</orientation>
    </subcellularLocation>
    <text evidence="3">Translocates to cytoplasm in response to apoptotic stimuli such as staurosporine treatment.</text>
</comment>
<comment type="similarity">
    <text evidence="6">Belongs to the protein-tyrosine phosphatase family. Non-receptor class dual specificity subfamily.</text>
</comment>
<dbReference type="EC" id="3.1.3.16" evidence="2"/>
<dbReference type="EC" id="3.1.3.48" evidence="2"/>
<dbReference type="EMBL" id="CR859626">
    <property type="protein sequence ID" value="CAH91788.1"/>
    <property type="molecule type" value="mRNA"/>
</dbReference>
<dbReference type="RefSeq" id="NP_001126038.1">
    <property type="nucleotide sequence ID" value="NM_001132566.1"/>
</dbReference>
<dbReference type="SMR" id="Q5R8X2"/>
<dbReference type="FunCoup" id="Q5R8X2">
    <property type="interactions" value="1475"/>
</dbReference>
<dbReference type="STRING" id="9601.ENSPPYP00000013073"/>
<dbReference type="GeneID" id="100172987"/>
<dbReference type="KEGG" id="pon:100172987"/>
<dbReference type="CTD" id="150290"/>
<dbReference type="eggNOG" id="KOG1718">
    <property type="taxonomic scope" value="Eukaryota"/>
</dbReference>
<dbReference type="InParanoid" id="Q5R8X2"/>
<dbReference type="OrthoDB" id="285418at2759"/>
<dbReference type="Proteomes" id="UP000001595">
    <property type="component" value="Unplaced"/>
</dbReference>
<dbReference type="GO" id="GO:0005737">
    <property type="term" value="C:cytoplasm"/>
    <property type="evidence" value="ECO:0000250"/>
    <property type="project" value="UniProtKB"/>
</dbReference>
<dbReference type="GO" id="GO:0005743">
    <property type="term" value="C:mitochondrial inner membrane"/>
    <property type="evidence" value="ECO:0007669"/>
    <property type="project" value="UniProtKB-SubCell"/>
</dbReference>
<dbReference type="GO" id="GO:0005634">
    <property type="term" value="C:nucleus"/>
    <property type="evidence" value="ECO:0000250"/>
    <property type="project" value="UniProtKB"/>
</dbReference>
<dbReference type="GO" id="GO:0017017">
    <property type="term" value="F:MAP kinase tyrosine/serine/threonine phosphatase activity"/>
    <property type="evidence" value="ECO:0007669"/>
    <property type="project" value="InterPro"/>
</dbReference>
<dbReference type="GO" id="GO:0016791">
    <property type="term" value="F:phosphatase activity"/>
    <property type="evidence" value="ECO:0000250"/>
    <property type="project" value="UniProtKB"/>
</dbReference>
<dbReference type="GO" id="GO:0004722">
    <property type="term" value="F:protein serine/threonine phosphatase activity"/>
    <property type="evidence" value="ECO:0007669"/>
    <property type="project" value="UniProtKB-EC"/>
</dbReference>
<dbReference type="GO" id="GO:0004725">
    <property type="term" value="F:protein tyrosine phosphatase activity"/>
    <property type="evidence" value="ECO:0007669"/>
    <property type="project" value="UniProtKB-EC"/>
</dbReference>
<dbReference type="GO" id="GO:0008138">
    <property type="term" value="F:protein tyrosine/serine/threonine phosphatase activity"/>
    <property type="evidence" value="ECO:0000250"/>
    <property type="project" value="UniProtKB"/>
</dbReference>
<dbReference type="GO" id="GO:0016311">
    <property type="term" value="P:dephosphorylation"/>
    <property type="evidence" value="ECO:0000250"/>
    <property type="project" value="UniProtKB"/>
</dbReference>
<dbReference type="GO" id="GO:0035970">
    <property type="term" value="P:peptidyl-threonine dephosphorylation"/>
    <property type="evidence" value="ECO:0000250"/>
    <property type="project" value="UniProtKB"/>
</dbReference>
<dbReference type="GO" id="GO:0035335">
    <property type="term" value="P:peptidyl-tyrosine dephosphorylation"/>
    <property type="evidence" value="ECO:0000250"/>
    <property type="project" value="UniProtKB"/>
</dbReference>
<dbReference type="CDD" id="cd14573">
    <property type="entry name" value="DUSP18_21"/>
    <property type="match status" value="1"/>
</dbReference>
<dbReference type="FunFam" id="3.90.190.10:FF:000049">
    <property type="entry name" value="Dual specificity protein phosphatase 14"/>
    <property type="match status" value="1"/>
</dbReference>
<dbReference type="Gene3D" id="3.90.190.10">
    <property type="entry name" value="Protein tyrosine phosphatase superfamily"/>
    <property type="match status" value="1"/>
</dbReference>
<dbReference type="InterPro" id="IPR020420">
    <property type="entry name" value="Atypical_DUSP_subfamB"/>
</dbReference>
<dbReference type="InterPro" id="IPR000340">
    <property type="entry name" value="Dual-sp_phosphatase_cat-dom"/>
</dbReference>
<dbReference type="InterPro" id="IPR029021">
    <property type="entry name" value="Prot-tyrosine_phosphatase-like"/>
</dbReference>
<dbReference type="InterPro" id="IPR016130">
    <property type="entry name" value="Tyr_Pase_AS"/>
</dbReference>
<dbReference type="InterPro" id="IPR000387">
    <property type="entry name" value="Tyr_Pase_dom"/>
</dbReference>
<dbReference type="InterPro" id="IPR020422">
    <property type="entry name" value="TYR_PHOSPHATASE_DUAL_dom"/>
</dbReference>
<dbReference type="PANTHER" id="PTHR46495:SF2">
    <property type="entry name" value="DUAL SPECIFICITY PROTEIN PHOSPHATASE 18"/>
    <property type="match status" value="1"/>
</dbReference>
<dbReference type="PANTHER" id="PTHR46495">
    <property type="entry name" value="DUAL SPECIFICITY PROTEIN PHOSPHATASE 21"/>
    <property type="match status" value="1"/>
</dbReference>
<dbReference type="Pfam" id="PF00782">
    <property type="entry name" value="DSPc"/>
    <property type="match status" value="1"/>
</dbReference>
<dbReference type="PRINTS" id="PR01908">
    <property type="entry name" value="ADSPHPHTASE"/>
</dbReference>
<dbReference type="PRINTS" id="PR01910">
    <property type="entry name" value="ADSPHPHTASEB"/>
</dbReference>
<dbReference type="SMART" id="SM00195">
    <property type="entry name" value="DSPc"/>
    <property type="match status" value="1"/>
</dbReference>
<dbReference type="SUPFAM" id="SSF52799">
    <property type="entry name" value="(Phosphotyrosine protein) phosphatases II"/>
    <property type="match status" value="1"/>
</dbReference>
<dbReference type="PROSITE" id="PS00383">
    <property type="entry name" value="TYR_PHOSPHATASE_1"/>
    <property type="match status" value="1"/>
</dbReference>
<dbReference type="PROSITE" id="PS50056">
    <property type="entry name" value="TYR_PHOSPHATASE_2"/>
    <property type="match status" value="1"/>
</dbReference>
<dbReference type="PROSITE" id="PS50054">
    <property type="entry name" value="TYR_PHOSPHATASE_DUAL"/>
    <property type="match status" value="1"/>
</dbReference>
<proteinExistence type="evidence at transcript level"/>
<accession>Q5R8X2</accession>
<protein>
    <recommendedName>
        <fullName>Dual specificity protein phosphatase 18</fullName>
        <ecNumber evidence="2">3.1.3.16</ecNumber>
        <ecNumber evidence="2">3.1.3.48</ecNumber>
    </recommendedName>
</protein>